<evidence type="ECO:0000255" key="1">
    <source>
        <dbReference type="HAMAP-Rule" id="MF_00508"/>
    </source>
</evidence>
<evidence type="ECO:0000305" key="2"/>
<reference key="1">
    <citation type="submission" date="2007-10" db="EMBL/GenBank/DDBJ databases">
        <title>Complete genome of Alkaliphilus oremlandii OhILAs.</title>
        <authorList>
            <person name="Copeland A."/>
            <person name="Lucas S."/>
            <person name="Lapidus A."/>
            <person name="Barry K."/>
            <person name="Detter J.C."/>
            <person name="Glavina del Rio T."/>
            <person name="Hammon N."/>
            <person name="Israni S."/>
            <person name="Dalin E."/>
            <person name="Tice H."/>
            <person name="Pitluck S."/>
            <person name="Chain P."/>
            <person name="Malfatti S."/>
            <person name="Shin M."/>
            <person name="Vergez L."/>
            <person name="Schmutz J."/>
            <person name="Larimer F."/>
            <person name="Land M."/>
            <person name="Hauser L."/>
            <person name="Kyrpides N."/>
            <person name="Mikhailova N."/>
            <person name="Stolz J.F."/>
            <person name="Dawson A."/>
            <person name="Fisher E."/>
            <person name="Crable B."/>
            <person name="Perera E."/>
            <person name="Lisak J."/>
            <person name="Ranganathan M."/>
            <person name="Basu P."/>
            <person name="Richardson P."/>
        </authorList>
    </citation>
    <scope>NUCLEOTIDE SEQUENCE [LARGE SCALE GENOMIC DNA]</scope>
    <source>
        <strain>OhILAs</strain>
    </source>
</reference>
<gene>
    <name evidence="1" type="primary">rpsJ</name>
    <name type="ordered locus">Clos_0491</name>
</gene>
<protein>
    <recommendedName>
        <fullName evidence="1">Small ribosomal subunit protein uS10</fullName>
    </recommendedName>
    <alternativeName>
        <fullName evidence="2">30S ribosomal protein S10</fullName>
    </alternativeName>
</protein>
<organism>
    <name type="scientific">Alkaliphilus oremlandii (strain OhILAs)</name>
    <name type="common">Clostridium oremlandii (strain OhILAs)</name>
    <dbReference type="NCBI Taxonomy" id="350688"/>
    <lineage>
        <taxon>Bacteria</taxon>
        <taxon>Bacillati</taxon>
        <taxon>Bacillota</taxon>
        <taxon>Clostridia</taxon>
        <taxon>Peptostreptococcales</taxon>
        <taxon>Natronincolaceae</taxon>
        <taxon>Alkaliphilus</taxon>
    </lineage>
</organism>
<accession>A8MLD9</accession>
<feature type="chain" id="PRO_1000060853" description="Small ribosomal subunit protein uS10">
    <location>
        <begin position="1"/>
        <end position="104"/>
    </location>
</feature>
<name>RS10_ALKOO</name>
<dbReference type="EMBL" id="CP000853">
    <property type="protein sequence ID" value="ABW18053.1"/>
    <property type="molecule type" value="Genomic_DNA"/>
</dbReference>
<dbReference type="RefSeq" id="WP_012158367.1">
    <property type="nucleotide sequence ID" value="NC_009922.1"/>
</dbReference>
<dbReference type="SMR" id="A8MLD9"/>
<dbReference type="STRING" id="350688.Clos_0491"/>
<dbReference type="KEGG" id="aoe:Clos_0491"/>
<dbReference type="eggNOG" id="COG0051">
    <property type="taxonomic scope" value="Bacteria"/>
</dbReference>
<dbReference type="HOGENOM" id="CLU_122625_1_3_9"/>
<dbReference type="OrthoDB" id="9804464at2"/>
<dbReference type="Proteomes" id="UP000000269">
    <property type="component" value="Chromosome"/>
</dbReference>
<dbReference type="GO" id="GO:1990904">
    <property type="term" value="C:ribonucleoprotein complex"/>
    <property type="evidence" value="ECO:0007669"/>
    <property type="project" value="UniProtKB-KW"/>
</dbReference>
<dbReference type="GO" id="GO:0005840">
    <property type="term" value="C:ribosome"/>
    <property type="evidence" value="ECO:0007669"/>
    <property type="project" value="UniProtKB-KW"/>
</dbReference>
<dbReference type="GO" id="GO:0003735">
    <property type="term" value="F:structural constituent of ribosome"/>
    <property type="evidence" value="ECO:0007669"/>
    <property type="project" value="InterPro"/>
</dbReference>
<dbReference type="GO" id="GO:0000049">
    <property type="term" value="F:tRNA binding"/>
    <property type="evidence" value="ECO:0007669"/>
    <property type="project" value="UniProtKB-UniRule"/>
</dbReference>
<dbReference type="GO" id="GO:0006412">
    <property type="term" value="P:translation"/>
    <property type="evidence" value="ECO:0007669"/>
    <property type="project" value="UniProtKB-UniRule"/>
</dbReference>
<dbReference type="FunFam" id="3.30.70.600:FF:000001">
    <property type="entry name" value="30S ribosomal protein S10"/>
    <property type="match status" value="1"/>
</dbReference>
<dbReference type="Gene3D" id="3.30.70.600">
    <property type="entry name" value="Ribosomal protein S10 domain"/>
    <property type="match status" value="1"/>
</dbReference>
<dbReference type="HAMAP" id="MF_00508">
    <property type="entry name" value="Ribosomal_uS10"/>
    <property type="match status" value="1"/>
</dbReference>
<dbReference type="InterPro" id="IPR001848">
    <property type="entry name" value="Ribosomal_uS10"/>
</dbReference>
<dbReference type="InterPro" id="IPR018268">
    <property type="entry name" value="Ribosomal_uS10_CS"/>
</dbReference>
<dbReference type="InterPro" id="IPR027486">
    <property type="entry name" value="Ribosomal_uS10_dom"/>
</dbReference>
<dbReference type="InterPro" id="IPR036838">
    <property type="entry name" value="Ribosomal_uS10_dom_sf"/>
</dbReference>
<dbReference type="NCBIfam" id="NF001861">
    <property type="entry name" value="PRK00596.1"/>
    <property type="match status" value="1"/>
</dbReference>
<dbReference type="NCBIfam" id="TIGR01049">
    <property type="entry name" value="rpsJ_bact"/>
    <property type="match status" value="1"/>
</dbReference>
<dbReference type="PANTHER" id="PTHR11700">
    <property type="entry name" value="30S RIBOSOMAL PROTEIN S10 FAMILY MEMBER"/>
    <property type="match status" value="1"/>
</dbReference>
<dbReference type="Pfam" id="PF00338">
    <property type="entry name" value="Ribosomal_S10"/>
    <property type="match status" value="1"/>
</dbReference>
<dbReference type="PRINTS" id="PR00971">
    <property type="entry name" value="RIBOSOMALS10"/>
</dbReference>
<dbReference type="SMART" id="SM01403">
    <property type="entry name" value="Ribosomal_S10"/>
    <property type="match status" value="1"/>
</dbReference>
<dbReference type="SUPFAM" id="SSF54999">
    <property type="entry name" value="Ribosomal protein S10"/>
    <property type="match status" value="1"/>
</dbReference>
<dbReference type="PROSITE" id="PS00361">
    <property type="entry name" value="RIBOSOMAL_S10"/>
    <property type="match status" value="1"/>
</dbReference>
<proteinExistence type="inferred from homology"/>
<comment type="function">
    <text evidence="1">Involved in the binding of tRNA to the ribosomes.</text>
</comment>
<comment type="subunit">
    <text evidence="1">Part of the 30S ribosomal subunit.</text>
</comment>
<comment type="similarity">
    <text evidence="1">Belongs to the universal ribosomal protein uS10 family.</text>
</comment>
<sequence length="104" mass="11830">MAKNNQKIRIRLKAYDHMALDQSAEKIVETAKKSGAEVSGPVPLPTEKQIITILRAVHKYKDSREQFEMRTHKRLIDILNPTPKTVDALMRLDLPAGVDIEIKL</sequence>
<keyword id="KW-1185">Reference proteome</keyword>
<keyword id="KW-0687">Ribonucleoprotein</keyword>
<keyword id="KW-0689">Ribosomal protein</keyword>